<proteinExistence type="inferred from homology"/>
<accession>Q31XW3</accession>
<organism>
    <name type="scientific">Shigella boydii serotype 4 (strain Sb227)</name>
    <dbReference type="NCBI Taxonomy" id="300268"/>
    <lineage>
        <taxon>Bacteria</taxon>
        <taxon>Pseudomonadati</taxon>
        <taxon>Pseudomonadota</taxon>
        <taxon>Gammaproteobacteria</taxon>
        <taxon>Enterobacterales</taxon>
        <taxon>Enterobacteriaceae</taxon>
        <taxon>Shigella</taxon>
    </lineage>
</organism>
<feature type="chain" id="PRO_1000083047" description="Co-chaperone protein HscB">
    <location>
        <begin position="1"/>
        <end position="171"/>
    </location>
</feature>
<feature type="domain" description="J" evidence="1">
    <location>
        <begin position="2"/>
        <end position="74"/>
    </location>
</feature>
<comment type="function">
    <text evidence="1">Co-chaperone involved in the maturation of iron-sulfur cluster-containing proteins. Seems to help targeting proteins to be folded toward HscA.</text>
</comment>
<comment type="subunit">
    <text evidence="1">Interacts with HscA and stimulates its ATPase activity. Interacts with IscU.</text>
</comment>
<comment type="similarity">
    <text evidence="1">Belongs to the HscB family.</text>
</comment>
<name>HSCB_SHIBS</name>
<evidence type="ECO:0000255" key="1">
    <source>
        <dbReference type="HAMAP-Rule" id="MF_00682"/>
    </source>
</evidence>
<sequence length="171" mass="20138">MDYFTLFGLPARYQLDTQALSLRFQDLQRQYHPDKFASGSQAEQLAAVQQSATINQAWQTLRHPLMRAEYLLSLHGFDLASEQHTVRDTAFLMEQLELREELDEIEQAKDEARLESFIKRVKKMFDTRHQLMVEQLDNETWDAAADTVRKLRFLDKLRSSAEQLEEKLLDF</sequence>
<keyword id="KW-0143">Chaperone</keyword>
<reference key="1">
    <citation type="journal article" date="2005" name="Nucleic Acids Res.">
        <title>Genome dynamics and diversity of Shigella species, the etiologic agents of bacillary dysentery.</title>
        <authorList>
            <person name="Yang F."/>
            <person name="Yang J."/>
            <person name="Zhang X."/>
            <person name="Chen L."/>
            <person name="Jiang Y."/>
            <person name="Yan Y."/>
            <person name="Tang X."/>
            <person name="Wang J."/>
            <person name="Xiong Z."/>
            <person name="Dong J."/>
            <person name="Xue Y."/>
            <person name="Zhu Y."/>
            <person name="Xu X."/>
            <person name="Sun L."/>
            <person name="Chen S."/>
            <person name="Nie H."/>
            <person name="Peng J."/>
            <person name="Xu J."/>
            <person name="Wang Y."/>
            <person name="Yuan Z."/>
            <person name="Wen Y."/>
            <person name="Yao Z."/>
            <person name="Shen Y."/>
            <person name="Qiang B."/>
            <person name="Hou Y."/>
            <person name="Yu J."/>
            <person name="Jin Q."/>
        </authorList>
    </citation>
    <scope>NUCLEOTIDE SEQUENCE [LARGE SCALE GENOMIC DNA]</scope>
    <source>
        <strain>Sb227</strain>
    </source>
</reference>
<protein>
    <recommendedName>
        <fullName evidence="1">Co-chaperone protein HscB</fullName>
    </recommendedName>
    <alternativeName>
        <fullName evidence="1">Hsc20</fullName>
    </alternativeName>
</protein>
<gene>
    <name evidence="1" type="primary">hscB</name>
    <name type="ordered locus">SBO_2551</name>
</gene>
<dbReference type="EMBL" id="CP000036">
    <property type="protein sequence ID" value="ABB67095.1"/>
    <property type="molecule type" value="Genomic_DNA"/>
</dbReference>
<dbReference type="RefSeq" id="WP_000384413.1">
    <property type="nucleotide sequence ID" value="NC_007613.1"/>
</dbReference>
<dbReference type="SMR" id="Q31XW3"/>
<dbReference type="GeneID" id="75172640"/>
<dbReference type="KEGG" id="sbo:SBO_2551"/>
<dbReference type="HOGENOM" id="CLU_068529_2_0_6"/>
<dbReference type="Proteomes" id="UP000007067">
    <property type="component" value="Chromosome"/>
</dbReference>
<dbReference type="GO" id="GO:1990230">
    <property type="term" value="C:iron-sulfur cluster transfer complex"/>
    <property type="evidence" value="ECO:0007669"/>
    <property type="project" value="TreeGrafter"/>
</dbReference>
<dbReference type="GO" id="GO:0001671">
    <property type="term" value="F:ATPase activator activity"/>
    <property type="evidence" value="ECO:0007669"/>
    <property type="project" value="InterPro"/>
</dbReference>
<dbReference type="GO" id="GO:0051087">
    <property type="term" value="F:protein-folding chaperone binding"/>
    <property type="evidence" value="ECO:0007669"/>
    <property type="project" value="InterPro"/>
</dbReference>
<dbReference type="GO" id="GO:0044571">
    <property type="term" value="P:[2Fe-2S] cluster assembly"/>
    <property type="evidence" value="ECO:0007669"/>
    <property type="project" value="InterPro"/>
</dbReference>
<dbReference type="GO" id="GO:0051259">
    <property type="term" value="P:protein complex oligomerization"/>
    <property type="evidence" value="ECO:0007669"/>
    <property type="project" value="InterPro"/>
</dbReference>
<dbReference type="GO" id="GO:0006457">
    <property type="term" value="P:protein folding"/>
    <property type="evidence" value="ECO:0007669"/>
    <property type="project" value="UniProtKB-UniRule"/>
</dbReference>
<dbReference type="CDD" id="cd06257">
    <property type="entry name" value="DnaJ"/>
    <property type="match status" value="1"/>
</dbReference>
<dbReference type="FunFam" id="1.10.287.110:FF:000008">
    <property type="entry name" value="Co-chaperone protein HscB"/>
    <property type="match status" value="1"/>
</dbReference>
<dbReference type="FunFam" id="1.20.1280.20:FF:000001">
    <property type="entry name" value="Co-chaperone protein HscB"/>
    <property type="match status" value="1"/>
</dbReference>
<dbReference type="Gene3D" id="1.10.287.110">
    <property type="entry name" value="DnaJ domain"/>
    <property type="match status" value="1"/>
</dbReference>
<dbReference type="Gene3D" id="1.20.1280.20">
    <property type="entry name" value="HscB, C-terminal domain"/>
    <property type="match status" value="1"/>
</dbReference>
<dbReference type="HAMAP" id="MF_00682">
    <property type="entry name" value="HscB"/>
    <property type="match status" value="1"/>
</dbReference>
<dbReference type="InterPro" id="IPR001623">
    <property type="entry name" value="DnaJ_domain"/>
</dbReference>
<dbReference type="InterPro" id="IPR004640">
    <property type="entry name" value="HscB"/>
</dbReference>
<dbReference type="InterPro" id="IPR036386">
    <property type="entry name" value="HscB_C_sf"/>
</dbReference>
<dbReference type="InterPro" id="IPR009073">
    <property type="entry name" value="HscB_oligo_C"/>
</dbReference>
<dbReference type="InterPro" id="IPR036869">
    <property type="entry name" value="J_dom_sf"/>
</dbReference>
<dbReference type="NCBIfam" id="TIGR00714">
    <property type="entry name" value="hscB"/>
    <property type="match status" value="1"/>
</dbReference>
<dbReference type="NCBIfam" id="NF003449">
    <property type="entry name" value="PRK05014.1"/>
    <property type="match status" value="1"/>
</dbReference>
<dbReference type="PANTHER" id="PTHR14021">
    <property type="entry name" value="IRON-SULFUR CLUSTER CO-CHAPERONE PROTEIN HSCB"/>
    <property type="match status" value="1"/>
</dbReference>
<dbReference type="PANTHER" id="PTHR14021:SF15">
    <property type="entry name" value="IRON-SULFUR CLUSTER CO-CHAPERONE PROTEIN HSCB"/>
    <property type="match status" value="1"/>
</dbReference>
<dbReference type="Pfam" id="PF07743">
    <property type="entry name" value="HSCB_C"/>
    <property type="match status" value="1"/>
</dbReference>
<dbReference type="SMART" id="SM00271">
    <property type="entry name" value="DnaJ"/>
    <property type="match status" value="1"/>
</dbReference>
<dbReference type="SUPFAM" id="SSF46565">
    <property type="entry name" value="Chaperone J-domain"/>
    <property type="match status" value="1"/>
</dbReference>
<dbReference type="SUPFAM" id="SSF47144">
    <property type="entry name" value="HSC20 (HSCB), C-terminal oligomerisation domain"/>
    <property type="match status" value="1"/>
</dbReference>
<dbReference type="PROSITE" id="PS50076">
    <property type="entry name" value="DNAJ_2"/>
    <property type="match status" value="1"/>
</dbReference>